<protein>
    <recommendedName>
        <fullName>Nesprin-3</fullName>
    </recommendedName>
    <alternativeName>
        <fullName>KASH domain-containing protein 3</fullName>
        <shortName>KASH3</shortName>
    </alternativeName>
    <alternativeName>
        <fullName>Nuclear envelope spectrin repeat protein 3</fullName>
    </alternativeName>
</protein>
<reference key="1">
    <citation type="journal article" date="2005" name="Science">
        <title>The transcriptional landscape of the mammalian genome.</title>
        <authorList>
            <person name="Carninci P."/>
            <person name="Kasukawa T."/>
            <person name="Katayama S."/>
            <person name="Gough J."/>
            <person name="Frith M.C."/>
            <person name="Maeda N."/>
            <person name="Oyama R."/>
            <person name="Ravasi T."/>
            <person name="Lenhard B."/>
            <person name="Wells C."/>
            <person name="Kodzius R."/>
            <person name="Shimokawa K."/>
            <person name="Bajic V.B."/>
            <person name="Brenner S.E."/>
            <person name="Batalov S."/>
            <person name="Forrest A.R."/>
            <person name="Zavolan M."/>
            <person name="Davis M.J."/>
            <person name="Wilming L.G."/>
            <person name="Aidinis V."/>
            <person name="Allen J.E."/>
            <person name="Ambesi-Impiombato A."/>
            <person name="Apweiler R."/>
            <person name="Aturaliya R.N."/>
            <person name="Bailey T.L."/>
            <person name="Bansal M."/>
            <person name="Baxter L."/>
            <person name="Beisel K.W."/>
            <person name="Bersano T."/>
            <person name="Bono H."/>
            <person name="Chalk A.M."/>
            <person name="Chiu K.P."/>
            <person name="Choudhary V."/>
            <person name="Christoffels A."/>
            <person name="Clutterbuck D.R."/>
            <person name="Crowe M.L."/>
            <person name="Dalla E."/>
            <person name="Dalrymple B.P."/>
            <person name="de Bono B."/>
            <person name="Della Gatta G."/>
            <person name="di Bernardo D."/>
            <person name="Down T."/>
            <person name="Engstrom P."/>
            <person name="Fagiolini M."/>
            <person name="Faulkner G."/>
            <person name="Fletcher C.F."/>
            <person name="Fukushima T."/>
            <person name="Furuno M."/>
            <person name="Futaki S."/>
            <person name="Gariboldi M."/>
            <person name="Georgii-Hemming P."/>
            <person name="Gingeras T.R."/>
            <person name="Gojobori T."/>
            <person name="Green R.E."/>
            <person name="Gustincich S."/>
            <person name="Harbers M."/>
            <person name="Hayashi Y."/>
            <person name="Hensch T.K."/>
            <person name="Hirokawa N."/>
            <person name="Hill D."/>
            <person name="Huminiecki L."/>
            <person name="Iacono M."/>
            <person name="Ikeo K."/>
            <person name="Iwama A."/>
            <person name="Ishikawa T."/>
            <person name="Jakt M."/>
            <person name="Kanapin A."/>
            <person name="Katoh M."/>
            <person name="Kawasawa Y."/>
            <person name="Kelso J."/>
            <person name="Kitamura H."/>
            <person name="Kitano H."/>
            <person name="Kollias G."/>
            <person name="Krishnan S.P."/>
            <person name="Kruger A."/>
            <person name="Kummerfeld S.K."/>
            <person name="Kurochkin I.V."/>
            <person name="Lareau L.F."/>
            <person name="Lazarevic D."/>
            <person name="Lipovich L."/>
            <person name="Liu J."/>
            <person name="Liuni S."/>
            <person name="McWilliam S."/>
            <person name="Madan Babu M."/>
            <person name="Madera M."/>
            <person name="Marchionni L."/>
            <person name="Matsuda H."/>
            <person name="Matsuzawa S."/>
            <person name="Miki H."/>
            <person name="Mignone F."/>
            <person name="Miyake S."/>
            <person name="Morris K."/>
            <person name="Mottagui-Tabar S."/>
            <person name="Mulder N."/>
            <person name="Nakano N."/>
            <person name="Nakauchi H."/>
            <person name="Ng P."/>
            <person name="Nilsson R."/>
            <person name="Nishiguchi S."/>
            <person name="Nishikawa S."/>
            <person name="Nori F."/>
            <person name="Ohara O."/>
            <person name="Okazaki Y."/>
            <person name="Orlando V."/>
            <person name="Pang K.C."/>
            <person name="Pavan W.J."/>
            <person name="Pavesi G."/>
            <person name="Pesole G."/>
            <person name="Petrovsky N."/>
            <person name="Piazza S."/>
            <person name="Reed J."/>
            <person name="Reid J.F."/>
            <person name="Ring B.Z."/>
            <person name="Ringwald M."/>
            <person name="Rost B."/>
            <person name="Ruan Y."/>
            <person name="Salzberg S.L."/>
            <person name="Sandelin A."/>
            <person name="Schneider C."/>
            <person name="Schoenbach C."/>
            <person name="Sekiguchi K."/>
            <person name="Semple C.A."/>
            <person name="Seno S."/>
            <person name="Sessa L."/>
            <person name="Sheng Y."/>
            <person name="Shibata Y."/>
            <person name="Shimada H."/>
            <person name="Shimada K."/>
            <person name="Silva D."/>
            <person name="Sinclair B."/>
            <person name="Sperling S."/>
            <person name="Stupka E."/>
            <person name="Sugiura K."/>
            <person name="Sultana R."/>
            <person name="Takenaka Y."/>
            <person name="Taki K."/>
            <person name="Tammoja K."/>
            <person name="Tan S.L."/>
            <person name="Tang S."/>
            <person name="Taylor M.S."/>
            <person name="Tegner J."/>
            <person name="Teichmann S.A."/>
            <person name="Ueda H.R."/>
            <person name="van Nimwegen E."/>
            <person name="Verardo R."/>
            <person name="Wei C.L."/>
            <person name="Yagi K."/>
            <person name="Yamanishi H."/>
            <person name="Zabarovsky E."/>
            <person name="Zhu S."/>
            <person name="Zimmer A."/>
            <person name="Hide W."/>
            <person name="Bult C."/>
            <person name="Grimmond S.M."/>
            <person name="Teasdale R.D."/>
            <person name="Liu E.T."/>
            <person name="Brusic V."/>
            <person name="Quackenbush J."/>
            <person name="Wahlestedt C."/>
            <person name="Mattick J.S."/>
            <person name="Hume D.A."/>
            <person name="Kai C."/>
            <person name="Sasaki D."/>
            <person name="Tomaru Y."/>
            <person name="Fukuda S."/>
            <person name="Kanamori-Katayama M."/>
            <person name="Suzuki M."/>
            <person name="Aoki J."/>
            <person name="Arakawa T."/>
            <person name="Iida J."/>
            <person name="Imamura K."/>
            <person name="Itoh M."/>
            <person name="Kato T."/>
            <person name="Kawaji H."/>
            <person name="Kawagashira N."/>
            <person name="Kawashima T."/>
            <person name="Kojima M."/>
            <person name="Kondo S."/>
            <person name="Konno H."/>
            <person name="Nakano K."/>
            <person name="Ninomiya N."/>
            <person name="Nishio T."/>
            <person name="Okada M."/>
            <person name="Plessy C."/>
            <person name="Shibata K."/>
            <person name="Shiraki T."/>
            <person name="Suzuki S."/>
            <person name="Tagami M."/>
            <person name="Waki K."/>
            <person name="Watahiki A."/>
            <person name="Okamura-Oho Y."/>
            <person name="Suzuki H."/>
            <person name="Kawai J."/>
            <person name="Hayashizaki Y."/>
        </authorList>
    </citation>
    <scope>NUCLEOTIDE SEQUENCE [LARGE SCALE MRNA] (ISOFORM 2)</scope>
    <scope>NUCLEOTIDE SEQUENCE [LARGE SCALE MRNA] OF 691-975 (ISOFORM 1)</scope>
    <source>
        <strain>C57BL/6J</strain>
        <tissue>Head</tissue>
        <tissue>Pituitary</tissue>
    </source>
</reference>
<reference key="2">
    <citation type="journal article" date="2004" name="Genome Res.">
        <title>The status, quality, and expansion of the NIH full-length cDNA project: the Mammalian Gene Collection (MGC).</title>
        <authorList>
            <consortium name="The MGC Project Team"/>
        </authorList>
    </citation>
    <scope>NUCLEOTIDE SEQUENCE [LARGE SCALE MRNA] (ISOFORM 1)</scope>
    <source>
        <tissue>Eye</tissue>
    </source>
</reference>
<reference key="3">
    <citation type="journal article" date="2005" name="J. Cell Biol.">
        <title>Nesprin-3, a novel outer nuclear membrane protein, associates with the cytoskeletal linker protein plectin.</title>
        <authorList>
            <person name="Wilhelmsen K."/>
            <person name="Litjens S.H.M."/>
            <person name="Kuikman I."/>
            <person name="Tshimbalanga N."/>
            <person name="Janssen H."/>
            <person name="van den Bout I."/>
            <person name="Raymond K."/>
            <person name="Sonnenberg A."/>
        </authorList>
    </citation>
    <scope>INTERACTION WITH PLEC</scope>
    <scope>FUNCTION</scope>
    <scope>TISSUE SPECIFICITY</scope>
    <scope>SUBCELLULAR LOCATION</scope>
</reference>
<reference key="4">
    <citation type="journal article" date="2008" name="Exp. Cell Res.">
        <title>Structural requirements for the assembly of LINC complexes and their function in cellular mechanical stiffness.</title>
        <authorList>
            <person name="Stewart-Hutchinson P.J."/>
            <person name="Hale C.M."/>
            <person name="Wirtz D."/>
            <person name="Hodzic D."/>
        </authorList>
    </citation>
    <scope>SUBCELLULAR LOCATION</scope>
</reference>
<reference key="5">
    <citation type="journal article" date="2008" name="Exp. Cell Res.">
        <title>Dystonin/Bpag1 is a necessary endoplasmic reticulum/nuclear envelope protein in sensory neurons.</title>
        <authorList>
            <person name="Young K.G."/>
            <person name="Kothary R."/>
        </authorList>
    </citation>
    <scope>INTERACTION WITH DST</scope>
</reference>
<reference key="6">
    <citation type="journal article" date="2008" name="J. Cell Sci.">
        <title>TorsinA binds the KASH domain of nesprins and participates in linkage between nuclear envelope and cytoskeleton.</title>
        <authorList>
            <person name="Nery F.C."/>
            <person name="Zeng J."/>
            <person name="Niland B.P."/>
            <person name="Hewett J."/>
            <person name="Farley J."/>
            <person name="Irimia D."/>
            <person name="Li Y."/>
            <person name="Wiche G."/>
            <person name="Sonnenberg A."/>
            <person name="Breakefield X.O."/>
        </authorList>
    </citation>
    <scope>INTERACTION WITH TOR1A</scope>
    <scope>SUBCELLULAR LOCATION</scope>
</reference>
<reference key="7">
    <citation type="journal article" date="2012" name="Int. J. Cell Biol.">
        <title>Cytoskeletal interactions at the nuclear envelope mediated by nesprins.</title>
        <authorList>
            <person name="Taranum S."/>
            <person name="Sur I."/>
            <person name="Muller R."/>
            <person name="Lu W."/>
            <person name="Rashmi R.N."/>
            <person name="Munck M."/>
            <person name="Neumann S."/>
            <person name="Karakesisoglou I."/>
            <person name="Noegel A.A."/>
        </authorList>
    </citation>
    <scope>INTERACTION WITH SYNE1</scope>
</reference>
<evidence type="ECO:0000250" key="1"/>
<evidence type="ECO:0000250" key="2">
    <source>
        <dbReference type="UniProtKB" id="Q8WXH0"/>
    </source>
</evidence>
<evidence type="ECO:0000255" key="3">
    <source>
        <dbReference type="PROSITE-ProRule" id="PRU00385"/>
    </source>
</evidence>
<evidence type="ECO:0000256" key="4">
    <source>
        <dbReference type="SAM" id="MobiDB-lite"/>
    </source>
</evidence>
<evidence type="ECO:0000269" key="5">
    <source>
    </source>
</evidence>
<evidence type="ECO:0000269" key="6">
    <source>
    </source>
</evidence>
<evidence type="ECO:0000269" key="7">
    <source>
    </source>
</evidence>
<evidence type="ECO:0000269" key="8">
    <source>
    </source>
</evidence>
<evidence type="ECO:0000303" key="9">
    <source>
    </source>
</evidence>
<evidence type="ECO:0000305" key="10"/>
<sequence length="975" mass="112035">MTQQPQEDFERSVEDAQAWMKVIQEQLQVNDNTKGPRAALEARLRETEKICQLESEGMVKVELVLRAAEALLATCQEGQKPEILARLRDIKSQWEETVTYMTHCHSRIEWVWLHWSEYLLAQDEFYRWFQKMVVALEPPVELQLGLKEKQWQLSHAQVLLHNVDNQAVLLDRLLEEAGSLFSRIGDPSVDEDAQKRMKAEYDAVKARAQRRVDLLAQVAQDHEQYREDVNEFQLWLKAVVEKVHSCLGRNCKLATELRLSTLQDIAKDFPRGEESLKRLEEQAVGVIQNTSPLGAEKISGELEEMRGVLEKLRVLWKEEEGRLRGLLQSRGDCEQQIQQLEAELGDFKKSLQRLAQEGLEPTVKTATEDELVAQWRLFSGTRAALASEEPRVDRLQTQLKKLVTFPDLQSLSDSVVATIQEYQSMKGKNTRLHNATRAELWQRFQRPLNDLQLWKALAQRLLDITASLPDLASIHTFLPQIEAALTESSRLKEQLAMLQLKTDLLGSIFGQERAATLLEQVTSSVRDRDLLHNSLLQRKSKLQSLLVQHKDFGVAFDPLNRKLLDLQARIQAEKGLPRDLPGKQVQLLRLQGLQEEGLDLGTQIEAVRPLAHGNSKHQQKVDQISCDQQALQRSLEDLVDRCQQNVREHCTFSHRLSELQLWITMATQTLESHQGDVRLWDAESQEAGLETLLSEIPEKEVQVSLLQALGQLVMKKSSPEGATMVQEELRKLMESWQALRLLEENMLSLMRNQQLQRTEVDTGKKQVFTNNIPKAGFLINPQDPIPRRQHGANPLEGHDLPEDHPQLLRDFEQWLQAENSKLRRIITMRVATAKDLRTREVKLQELEARIPEGQHLFENLLRLRPARDPSNELEDLRYRWMLYKSKLKDSGHLLTESSPGELTAFQKSRRQKRWSPCSLLQKACRVALPLQLLLLLFLLLLFLLPAGEEERSCALANNFARSFALMLRYNGPPPT</sequence>
<accession>Q4FZC9</accession>
<accession>Q8BMM1</accession>
<accession>Q8C117</accession>
<name>SYNE3_MOUSE</name>
<proteinExistence type="evidence at protein level"/>
<keyword id="KW-0025">Alternative splicing</keyword>
<keyword id="KW-1015">Disulfide bond</keyword>
<keyword id="KW-0256">Endoplasmic reticulum</keyword>
<keyword id="KW-0472">Membrane</keyword>
<keyword id="KW-0539">Nucleus</keyword>
<keyword id="KW-1185">Reference proteome</keyword>
<keyword id="KW-0677">Repeat</keyword>
<keyword id="KW-0812">Transmembrane</keyword>
<keyword id="KW-1133">Transmembrane helix</keyword>
<comment type="function">
    <text evidence="1 5">As a component of the LINC (LInker of Nucleoskeleton and Cytoskeleton) complex involved in the connection between the nuclear lamina and the cytoskeleton. The nucleocytoplasmic interactions established by the LINC complex play an important role in the transmission of mechanical forces across the nuclear envelope and in nuclear movement and positioning. Probable anchoring protein which tethers the nucleus to the cytoskeleton by binding PLEC which can associate with the intermediate filament system. Plays a role in the regulation of aortic epithelial cell morphology, and is required for flow-induced centrosome polarization and directional migration in aortic endothelial cells (By similarity).</text>
</comment>
<comment type="subunit">
    <text evidence="5 6 7 8">Core component of LINC complexes which are composed of inner nuclear membrane SUN domain-containing proteins coupled to outer nuclear membrane KASH domain-containing nesprins. SUN and KASH domain-containing proteins seem to bind each other promiscuously; however, differentially expression of LINC complex constituents can give rise to specific assemblies. Interacts with SUN1 and SUN2; probably forming respective LINC complexes. Interacts with PLEC (via actin-binding domain). Interacts with DST. Interacts with SYNE1. Interacts (via KASH domain) with TOR1A (ATP-bound); the interaction is required for SYNE3 nuclear envelope localization.</text>
</comment>
<comment type="subcellular location">
    <subcellularLocation>
        <location>Nucleus outer membrane</location>
        <topology>Single-pass type IV membrane protein</topology>
    </subcellularLocation>
    <subcellularLocation>
        <location>Nucleus envelope</location>
    </subcellularLocation>
    <subcellularLocation>
        <location>Rough endoplasmic reticulum</location>
    </subcellularLocation>
</comment>
<comment type="alternative products">
    <event type="alternative splicing"/>
    <isoform>
        <id>Q4FZC9-1</id>
        <name>1</name>
        <sequence type="displayed"/>
    </isoform>
    <isoform>
        <id>Q4FZC9-2</id>
        <name>2</name>
        <sequence type="described" ref="VSP_023979 VSP_023980"/>
    </isoform>
</comment>
<comment type="tissue specificity">
    <text evidence="5">Ubiquitous.</text>
</comment>
<comment type="domain">
    <text evidence="1">The KASH domain is involved in the binding to SUN1 and SUN2 through recognition of their SUN domains.</text>
</comment>
<comment type="PTM">
    <text evidence="2">The disulfid bond with SUN1 or SUN2 is required for stability of the respective LINC complex under tensile forces.</text>
</comment>
<comment type="similarity">
    <text evidence="10">Belongs to the nesprin family.</text>
</comment>
<comment type="sequence caution" evidence="10">
    <conflict type="frameshift">
        <sequence resource="EMBL-CDS" id="BAC26351"/>
    </conflict>
</comment>
<gene>
    <name type="primary">Syne3</name>
</gene>
<organism>
    <name type="scientific">Mus musculus</name>
    <name type="common">Mouse</name>
    <dbReference type="NCBI Taxonomy" id="10090"/>
    <lineage>
        <taxon>Eukaryota</taxon>
        <taxon>Metazoa</taxon>
        <taxon>Chordata</taxon>
        <taxon>Craniata</taxon>
        <taxon>Vertebrata</taxon>
        <taxon>Euteleostomi</taxon>
        <taxon>Mammalia</taxon>
        <taxon>Eutheria</taxon>
        <taxon>Euarchontoglires</taxon>
        <taxon>Glires</taxon>
        <taxon>Rodentia</taxon>
        <taxon>Myomorpha</taxon>
        <taxon>Muroidea</taxon>
        <taxon>Muridae</taxon>
        <taxon>Murinae</taxon>
        <taxon>Mus</taxon>
        <taxon>Mus</taxon>
    </lineage>
</organism>
<dbReference type="EMBL" id="AK029216">
    <property type="protein sequence ID" value="BAC26351.1"/>
    <property type="status" value="ALT_FRAME"/>
    <property type="molecule type" value="mRNA"/>
</dbReference>
<dbReference type="EMBL" id="AK030542">
    <property type="protein sequence ID" value="BAC27012.1"/>
    <property type="molecule type" value="mRNA"/>
</dbReference>
<dbReference type="EMBL" id="BC099694">
    <property type="protein sequence ID" value="AAH99694.1"/>
    <property type="molecule type" value="mRNA"/>
</dbReference>
<dbReference type="CCDS" id="CCDS36542.1">
    <molecule id="Q4FZC9-1"/>
</dbReference>
<dbReference type="CCDS" id="CCDS36543.1">
    <molecule id="Q4FZC9-2"/>
</dbReference>
<dbReference type="RefSeq" id="NP_001036164.1">
    <molecule id="Q4FZC9-1"/>
    <property type="nucleotide sequence ID" value="NM_001042699.3"/>
</dbReference>
<dbReference type="RefSeq" id="NP_001390387.1">
    <molecule id="Q4FZC9-1"/>
    <property type="nucleotide sequence ID" value="NM_001403458.1"/>
</dbReference>
<dbReference type="RefSeq" id="NP_766088.2">
    <molecule id="Q4FZC9-2"/>
    <property type="nucleotide sequence ID" value="NM_172500.4"/>
</dbReference>
<dbReference type="RefSeq" id="XP_006515715.2">
    <property type="nucleotide sequence ID" value="XM_006515652.3"/>
</dbReference>
<dbReference type="RefSeq" id="XP_006515716.1">
    <molecule id="Q4FZC9-1"/>
    <property type="nucleotide sequence ID" value="XM_006515653.4"/>
</dbReference>
<dbReference type="RefSeq" id="XP_006515717.1">
    <molecule id="Q4FZC9-1"/>
    <property type="nucleotide sequence ID" value="XM_006515654.5"/>
</dbReference>
<dbReference type="SMR" id="Q4FZC9"/>
<dbReference type="BioGRID" id="229284">
    <property type="interactions" value="1"/>
</dbReference>
<dbReference type="FunCoup" id="Q4FZC9">
    <property type="interactions" value="464"/>
</dbReference>
<dbReference type="IntAct" id="Q4FZC9">
    <property type="interactions" value="2"/>
</dbReference>
<dbReference type="STRING" id="10090.ENSMUSP00000093090"/>
<dbReference type="iPTMnet" id="Q4FZC9"/>
<dbReference type="PhosphoSitePlus" id="Q4FZC9"/>
<dbReference type="SwissPalm" id="Q4FZC9"/>
<dbReference type="jPOST" id="Q4FZC9"/>
<dbReference type="PaxDb" id="10090-ENSMUSP00000093090"/>
<dbReference type="PeptideAtlas" id="Q4FZC9"/>
<dbReference type="ProteomicsDB" id="263183">
    <molecule id="Q4FZC9-1"/>
</dbReference>
<dbReference type="ProteomicsDB" id="263184">
    <molecule id="Q4FZC9-2"/>
</dbReference>
<dbReference type="Pumba" id="Q4FZC9"/>
<dbReference type="Antibodypedia" id="54248">
    <property type="antibodies" value="163 antibodies from 30 providers"/>
</dbReference>
<dbReference type="Ensembl" id="ENSMUST00000067005.11">
    <molecule id="Q4FZC9-2"/>
    <property type="protein sequence ID" value="ENSMUSP00000065771.4"/>
    <property type="gene ID" value="ENSMUSG00000054150.13"/>
</dbReference>
<dbReference type="Ensembl" id="ENSMUST00000095439.11">
    <molecule id="Q4FZC9-1"/>
    <property type="protein sequence ID" value="ENSMUSP00000093090.4"/>
    <property type="gene ID" value="ENSMUSG00000054150.13"/>
</dbReference>
<dbReference type="Ensembl" id="ENSMUST00000109927.2">
    <molecule id="Q4FZC9-2"/>
    <property type="protein sequence ID" value="ENSMUSP00000105553.2"/>
    <property type="gene ID" value="ENSMUSG00000054150.13"/>
</dbReference>
<dbReference type="GeneID" id="212073"/>
<dbReference type="KEGG" id="mmu:212073"/>
<dbReference type="UCSC" id="uc007oxr.2">
    <molecule id="Q4FZC9-1"/>
    <property type="organism name" value="mouse"/>
</dbReference>
<dbReference type="UCSC" id="uc007oxs.2">
    <molecule id="Q4FZC9-2"/>
    <property type="organism name" value="mouse"/>
</dbReference>
<dbReference type="AGR" id="MGI:2442408"/>
<dbReference type="CTD" id="161176"/>
<dbReference type="MGI" id="MGI:2442408">
    <property type="gene designation" value="Syne3"/>
</dbReference>
<dbReference type="VEuPathDB" id="HostDB:ENSMUSG00000054150"/>
<dbReference type="eggNOG" id="ENOG502QQSI">
    <property type="taxonomic scope" value="Eukaryota"/>
</dbReference>
<dbReference type="GeneTree" id="ENSGT00440000039367"/>
<dbReference type="HOGENOM" id="CLU_012764_0_0_1"/>
<dbReference type="InParanoid" id="Q4FZC9"/>
<dbReference type="OMA" id="ACCLEDQ"/>
<dbReference type="OrthoDB" id="9838382at2759"/>
<dbReference type="PhylomeDB" id="Q4FZC9"/>
<dbReference type="TreeFam" id="TF331132"/>
<dbReference type="BioGRID-ORCS" id="212073">
    <property type="hits" value="4 hits in 77 CRISPR screens"/>
</dbReference>
<dbReference type="PRO" id="PR:Q4FZC9"/>
<dbReference type="Proteomes" id="UP000000589">
    <property type="component" value="Chromosome 12"/>
</dbReference>
<dbReference type="RNAct" id="Q4FZC9">
    <property type="molecule type" value="protein"/>
</dbReference>
<dbReference type="Bgee" id="ENSMUSG00000054150">
    <property type="expression patterns" value="Expressed in retinal neural layer and 76 other cell types or tissues"/>
</dbReference>
<dbReference type="GO" id="GO:0034993">
    <property type="term" value="C:meiotic nuclear membrane microtubule tethering complex"/>
    <property type="evidence" value="ECO:0000314"/>
    <property type="project" value="MGI"/>
</dbReference>
<dbReference type="GO" id="GO:0005635">
    <property type="term" value="C:nuclear envelope"/>
    <property type="evidence" value="ECO:0000250"/>
    <property type="project" value="UniProtKB"/>
</dbReference>
<dbReference type="GO" id="GO:0005640">
    <property type="term" value="C:nuclear outer membrane"/>
    <property type="evidence" value="ECO:0000314"/>
    <property type="project" value="UniProtKB"/>
</dbReference>
<dbReference type="GO" id="GO:0005791">
    <property type="term" value="C:rough endoplasmic reticulum"/>
    <property type="evidence" value="ECO:0007669"/>
    <property type="project" value="UniProtKB-SubCell"/>
</dbReference>
<dbReference type="GO" id="GO:0051015">
    <property type="term" value="F:actin filament binding"/>
    <property type="evidence" value="ECO:0000250"/>
    <property type="project" value="UniProtKB"/>
</dbReference>
<dbReference type="GO" id="GO:0140444">
    <property type="term" value="F:cytoskeleton-nuclear membrane anchor activity"/>
    <property type="evidence" value="ECO:0007669"/>
    <property type="project" value="Ensembl"/>
</dbReference>
<dbReference type="GO" id="GO:0007010">
    <property type="term" value="P:cytoskeleton organization"/>
    <property type="evidence" value="ECO:0000250"/>
    <property type="project" value="UniProtKB"/>
</dbReference>
<dbReference type="GO" id="GO:0090150">
    <property type="term" value="P:establishment of protein localization to membrane"/>
    <property type="evidence" value="ECO:0000250"/>
    <property type="project" value="UniProtKB"/>
</dbReference>
<dbReference type="GO" id="GO:0008360">
    <property type="term" value="P:regulation of cell shape"/>
    <property type="evidence" value="ECO:0000250"/>
    <property type="project" value="UniProtKB"/>
</dbReference>
<dbReference type="FunFam" id="1.20.58.60:FF:000416">
    <property type="entry name" value="Spectrin repeat containing nuclear envelope family member 3"/>
    <property type="match status" value="1"/>
</dbReference>
<dbReference type="FunFam" id="1.20.58.60:FF:000608">
    <property type="entry name" value="Spectrin repeat containing nuclear envelope family member 3"/>
    <property type="match status" value="1"/>
</dbReference>
<dbReference type="FunFam" id="1.20.58.60:FF:000247">
    <property type="entry name" value="Spectrin repeat-containing, nuclear envelope family member 3"/>
    <property type="match status" value="1"/>
</dbReference>
<dbReference type="Gene3D" id="1.20.58.60">
    <property type="match status" value="3"/>
</dbReference>
<dbReference type="InterPro" id="IPR012315">
    <property type="entry name" value="KASH"/>
</dbReference>
<dbReference type="InterPro" id="IPR052403">
    <property type="entry name" value="LINC-complex_assoc"/>
</dbReference>
<dbReference type="InterPro" id="IPR018159">
    <property type="entry name" value="Spectrin/alpha-actinin"/>
</dbReference>
<dbReference type="InterPro" id="IPR002017">
    <property type="entry name" value="Spectrin_repeat"/>
</dbReference>
<dbReference type="PANTHER" id="PTHR47535:SF9">
    <property type="entry name" value="CALPONIN-HOMOLOGY (CH) DOMAIN-CONTAINING PROTEIN"/>
    <property type="match status" value="1"/>
</dbReference>
<dbReference type="PANTHER" id="PTHR47535">
    <property type="entry name" value="MUSCLE-SPECIFIC PROTEIN 300 KDA, ISOFORM G"/>
    <property type="match status" value="1"/>
</dbReference>
<dbReference type="Pfam" id="PF10541">
    <property type="entry name" value="KASH"/>
    <property type="match status" value="1"/>
</dbReference>
<dbReference type="Pfam" id="PF00435">
    <property type="entry name" value="Spectrin"/>
    <property type="match status" value="2"/>
</dbReference>
<dbReference type="SMART" id="SM01249">
    <property type="entry name" value="KASH"/>
    <property type="match status" value="1"/>
</dbReference>
<dbReference type="SMART" id="SM00150">
    <property type="entry name" value="SPEC"/>
    <property type="match status" value="3"/>
</dbReference>
<dbReference type="SUPFAM" id="SSF46966">
    <property type="entry name" value="Spectrin repeat"/>
    <property type="match status" value="4"/>
</dbReference>
<dbReference type="PROSITE" id="PS51049">
    <property type="entry name" value="KASH"/>
    <property type="match status" value="1"/>
</dbReference>
<feature type="chain" id="PRO_0000281121" description="Nesprin-3">
    <location>
        <begin position="1"/>
        <end position="975"/>
    </location>
</feature>
<feature type="topological domain" description="Cytoplasmic" evidence="3">
    <location>
        <begin position="1"/>
        <end position="925"/>
    </location>
</feature>
<feature type="transmembrane region" description="Helical; Anchor for type IV membrane protein" evidence="3">
    <location>
        <begin position="926"/>
        <end position="946"/>
    </location>
</feature>
<feature type="topological domain" description="Perinuclear space" evidence="3">
    <location>
        <begin position="947"/>
        <end position="975"/>
    </location>
</feature>
<feature type="repeat" description="Spectrin 1">
    <location>
        <begin position="220"/>
        <end position="325"/>
    </location>
</feature>
<feature type="repeat" description="Spectrin 2">
    <location>
        <begin position="647"/>
        <end position="740"/>
    </location>
</feature>
<feature type="domain" description="KASH" evidence="3">
    <location>
        <begin position="917"/>
        <end position="975"/>
    </location>
</feature>
<feature type="region of interest" description="Disordered" evidence="4">
    <location>
        <begin position="778"/>
        <end position="798"/>
    </location>
</feature>
<feature type="disulfide bond" description="Interchain (C-577 in SUN2); alternate" evidence="2">
    <location>
        <position position="953"/>
    </location>
</feature>
<feature type="disulfide bond" description="Interchain (with C-759 in SUN1)" evidence="2">
    <location>
        <position position="953"/>
    </location>
</feature>
<feature type="splice variant" id="VSP_023979" description="In isoform 2." evidence="9">
    <location>
        <begin position="1"/>
        <end position="87"/>
    </location>
</feature>
<feature type="splice variant" id="VSP_023980" description="In isoform 2." evidence="9">
    <original>RDIKSQWEETVTYMTHCH</original>
    <variation>MTTRRGPERPWRQGFERQ</variation>
    <location>
        <begin position="88"/>
        <end position="105"/>
    </location>
</feature>